<gene>
    <name type="primary">MT-CO3</name>
    <name type="synonym">COIII</name>
    <name type="synonym">COXIII</name>
    <name type="synonym">MTCO3</name>
</gene>
<reference key="1">
    <citation type="journal article" date="1999" name="Mol. Phylogenet. Evol.">
        <title>Phylogenetic relationships in the bovid subfamily Antilopinae based on mitochondrial DNA sequences.</title>
        <authorList>
            <person name="Rebholz W.E.R."/>
            <person name="Harley E.H."/>
        </authorList>
    </citation>
    <scope>NUCLEOTIDE SEQUENCE [GENOMIC DNA]</scope>
</reference>
<protein>
    <recommendedName>
        <fullName>Cytochrome c oxidase subunit 3</fullName>
        <ecNumber>7.1.1.9</ecNumber>
    </recommendedName>
    <alternativeName>
        <fullName>Cytochrome c oxidase polypeptide III</fullName>
    </alternativeName>
</protein>
<accession>O47690</accession>
<geneLocation type="mitochondrion"/>
<comment type="function">
    <text evidence="2">Component of the cytochrome c oxidase, the last enzyme in the mitochondrial electron transport chain which drives oxidative phosphorylation. The respiratory chain contains 3 multisubunit complexes succinate dehydrogenase (complex II, CII), ubiquinol-cytochrome c oxidoreductase (cytochrome b-c1 complex, complex III, CIII) and cytochrome c oxidase (complex IV, CIV), that cooperate to transfer electrons derived from NADH and succinate to molecular oxygen, creating an electrochemical gradient over the inner membrane that drives transmembrane transport and the ATP synthase. Cytochrome c oxidase is the component of the respiratory chain that catalyzes the reduction of oxygen to water. Electrons originating from reduced cytochrome c in the intermembrane space (IMS) are transferred via the dinuclear copper A center (CU(A)) of subunit 2 and heme A of subunit 1 to the active site in subunit 1, a binuclear center (BNC) formed by heme A3 and copper B (CU(B)). The BNC reduces molecular oxygen to 2 water molecules using 4 electrons from cytochrome c in the IMS and 4 protons from the mitochondrial matrix.</text>
</comment>
<comment type="catalytic activity">
    <reaction evidence="2">
        <text>4 Fe(II)-[cytochrome c] + O2 + 8 H(+)(in) = 4 Fe(III)-[cytochrome c] + 2 H2O + 4 H(+)(out)</text>
        <dbReference type="Rhea" id="RHEA:11436"/>
        <dbReference type="Rhea" id="RHEA-COMP:10350"/>
        <dbReference type="Rhea" id="RHEA-COMP:14399"/>
        <dbReference type="ChEBI" id="CHEBI:15377"/>
        <dbReference type="ChEBI" id="CHEBI:15378"/>
        <dbReference type="ChEBI" id="CHEBI:15379"/>
        <dbReference type="ChEBI" id="CHEBI:29033"/>
        <dbReference type="ChEBI" id="CHEBI:29034"/>
        <dbReference type="EC" id="7.1.1.9"/>
    </reaction>
    <physiologicalReaction direction="left-to-right" evidence="2">
        <dbReference type="Rhea" id="RHEA:11437"/>
    </physiologicalReaction>
</comment>
<comment type="subunit">
    <text evidence="1">Component of the cytochrome c oxidase (complex IV, CIV), a multisubunit enzyme composed of 14 subunits. The complex is composed of a catalytic core of 3 subunits MT-CO1, MT-CO2 and MT-CO3, encoded in the mitochondrial DNA, and 11 supernumerary subunits COX4I, COX5A, COX5B, COX6A, COX6B, COX6C, COX7A, COX7B, COX7C, COX8 and NDUFA4, which are encoded in the nuclear genome. The complex exists as a monomer or a dimer and forms supercomplexes (SCs) in the inner mitochondrial membrane with NADH-ubiquinone oxidoreductase (complex I, CI) and ubiquinol-cytochrome c oxidoreductase (cytochrome b-c1 complex, complex III, CIII), resulting in different assemblies (supercomplex SCI(1)III(2)IV(1) and megacomplex MCI(2)III(2)IV(2)).</text>
</comment>
<comment type="subcellular location">
    <subcellularLocation>
        <location evidence="1">Mitochondrion inner membrane</location>
        <topology evidence="1">Multi-pass membrane protein</topology>
    </subcellularLocation>
</comment>
<comment type="similarity">
    <text evidence="3">Belongs to the cytochrome c oxidase subunit 3 family.</text>
</comment>
<feature type="chain" id="PRO_0000183859" description="Cytochrome c oxidase subunit 3">
    <location>
        <begin position="1"/>
        <end position="261"/>
    </location>
</feature>
<feature type="topological domain" description="Mitochondrial matrix" evidence="1">
    <location>
        <begin position="1"/>
        <end position="15"/>
    </location>
</feature>
<feature type="transmembrane region" description="Helical; Name=I" evidence="1">
    <location>
        <begin position="16"/>
        <end position="34"/>
    </location>
</feature>
<feature type="topological domain" description="Mitochondrial intermembrane" evidence="1">
    <location>
        <begin position="35"/>
        <end position="40"/>
    </location>
</feature>
<feature type="transmembrane region" description="Helical; Name=II" evidence="1">
    <location>
        <begin position="41"/>
        <end position="66"/>
    </location>
</feature>
<feature type="topological domain" description="Mitochondrial matrix" evidence="1">
    <location>
        <begin position="67"/>
        <end position="72"/>
    </location>
</feature>
<feature type="transmembrane region" description="Helical; Name=III" evidence="1">
    <location>
        <begin position="73"/>
        <end position="105"/>
    </location>
</feature>
<feature type="topological domain" description="Mitochondrial intermembrane" evidence="1">
    <location>
        <begin position="106"/>
        <end position="128"/>
    </location>
</feature>
<feature type="transmembrane region" description="Helical; Name=IV" evidence="1">
    <location>
        <begin position="129"/>
        <end position="152"/>
    </location>
</feature>
<feature type="topological domain" description="Mitochondrial matrix" evidence="1">
    <location>
        <begin position="153"/>
        <end position="155"/>
    </location>
</feature>
<feature type="transmembrane region" description="Helical; Name=V" evidence="1">
    <location>
        <begin position="156"/>
        <end position="183"/>
    </location>
</feature>
<feature type="topological domain" description="Mitochondrial intermembrane" evidence="1">
    <location>
        <begin position="184"/>
        <end position="190"/>
    </location>
</feature>
<feature type="transmembrane region" description="Helical; Name=VI" evidence="1">
    <location>
        <begin position="191"/>
        <end position="223"/>
    </location>
</feature>
<feature type="topological domain" description="Mitochondrial matrix" evidence="1">
    <location>
        <begin position="224"/>
        <end position="232"/>
    </location>
</feature>
<feature type="transmembrane region" description="Helical; Name=VII" evidence="1">
    <location>
        <begin position="233"/>
        <end position="256"/>
    </location>
</feature>
<feature type="topological domain" description="Mitochondrial intermembrane" evidence="1">
    <location>
        <begin position="257"/>
        <end position="261"/>
    </location>
</feature>
<organism>
    <name type="scientific">Syncerus caffer</name>
    <name type="common">African buffalo</name>
    <dbReference type="NCBI Taxonomy" id="9970"/>
    <lineage>
        <taxon>Eukaryota</taxon>
        <taxon>Metazoa</taxon>
        <taxon>Chordata</taxon>
        <taxon>Craniata</taxon>
        <taxon>Vertebrata</taxon>
        <taxon>Euteleostomi</taxon>
        <taxon>Mammalia</taxon>
        <taxon>Eutheria</taxon>
        <taxon>Laurasiatheria</taxon>
        <taxon>Artiodactyla</taxon>
        <taxon>Ruminantia</taxon>
        <taxon>Pecora</taxon>
        <taxon>Bovidae</taxon>
        <taxon>Bovinae</taxon>
        <taxon>Syncerus</taxon>
    </lineage>
</organism>
<name>COX3_SYNCA</name>
<dbReference type="EC" id="7.1.1.9"/>
<dbReference type="EMBL" id="AF030279">
    <property type="protein sequence ID" value="AAB92241.1"/>
    <property type="molecule type" value="Genomic_DNA"/>
</dbReference>
<dbReference type="SMR" id="O47690"/>
<dbReference type="GO" id="GO:0005743">
    <property type="term" value="C:mitochondrial inner membrane"/>
    <property type="evidence" value="ECO:0007669"/>
    <property type="project" value="UniProtKB-SubCell"/>
</dbReference>
<dbReference type="GO" id="GO:0045277">
    <property type="term" value="C:respiratory chain complex IV"/>
    <property type="evidence" value="ECO:0000250"/>
    <property type="project" value="UniProtKB"/>
</dbReference>
<dbReference type="GO" id="GO:0004129">
    <property type="term" value="F:cytochrome-c oxidase activity"/>
    <property type="evidence" value="ECO:0007669"/>
    <property type="project" value="UniProtKB-EC"/>
</dbReference>
<dbReference type="GO" id="GO:0006123">
    <property type="term" value="P:mitochondrial electron transport, cytochrome c to oxygen"/>
    <property type="evidence" value="ECO:0007669"/>
    <property type="project" value="TreeGrafter"/>
</dbReference>
<dbReference type="GO" id="GO:0008535">
    <property type="term" value="P:respiratory chain complex IV assembly"/>
    <property type="evidence" value="ECO:0000250"/>
    <property type="project" value="UniProtKB"/>
</dbReference>
<dbReference type="CDD" id="cd01665">
    <property type="entry name" value="Cyt_c_Oxidase_III"/>
    <property type="match status" value="1"/>
</dbReference>
<dbReference type="FunFam" id="1.10.287.70:FF:000048">
    <property type="entry name" value="Cytochrome c oxidase subunit 3"/>
    <property type="match status" value="1"/>
</dbReference>
<dbReference type="FunFam" id="1.20.120.80:FF:000002">
    <property type="entry name" value="Cytochrome c oxidase subunit 3"/>
    <property type="match status" value="1"/>
</dbReference>
<dbReference type="Gene3D" id="1.10.287.70">
    <property type="match status" value="1"/>
</dbReference>
<dbReference type="Gene3D" id="1.20.120.80">
    <property type="entry name" value="Cytochrome c oxidase, subunit III, four-helix bundle"/>
    <property type="match status" value="1"/>
</dbReference>
<dbReference type="InterPro" id="IPR024791">
    <property type="entry name" value="Cyt_c/ubiquinol_Oxase_su3"/>
</dbReference>
<dbReference type="InterPro" id="IPR033945">
    <property type="entry name" value="Cyt_c_oxase_su3_dom"/>
</dbReference>
<dbReference type="InterPro" id="IPR000298">
    <property type="entry name" value="Cyt_c_oxidase-like_su3"/>
</dbReference>
<dbReference type="InterPro" id="IPR035973">
    <property type="entry name" value="Cyt_c_oxidase_su3-like_sf"/>
</dbReference>
<dbReference type="InterPro" id="IPR013833">
    <property type="entry name" value="Cyt_c_oxidase_su3_a-hlx"/>
</dbReference>
<dbReference type="PANTHER" id="PTHR11403:SF7">
    <property type="entry name" value="CYTOCHROME C OXIDASE SUBUNIT 3"/>
    <property type="match status" value="1"/>
</dbReference>
<dbReference type="PANTHER" id="PTHR11403">
    <property type="entry name" value="CYTOCHROME C OXIDASE SUBUNIT III"/>
    <property type="match status" value="1"/>
</dbReference>
<dbReference type="Pfam" id="PF00510">
    <property type="entry name" value="COX3"/>
    <property type="match status" value="1"/>
</dbReference>
<dbReference type="SUPFAM" id="SSF81452">
    <property type="entry name" value="Cytochrome c oxidase subunit III-like"/>
    <property type="match status" value="1"/>
</dbReference>
<dbReference type="PROSITE" id="PS50253">
    <property type="entry name" value="COX3"/>
    <property type="match status" value="1"/>
</dbReference>
<sequence>MTHQTHAYHMVNPSPWPLTGALSALLMTSGLIMWFHFNSTALLMLGLTTNMLTMYQWWRDIIRESTFQGHHTPVVQKGLRYGMILFIISEVLFFTGFFWAFYHSSLAPTPELGGCWPPTGINPLNPLEVPLLNTSVLLASGVSITWAHHSLMEGNRSHMLQALFITITLGVYFTLLQASEYYEAPFTISDGVYGSTFFVATGFHGLHVIIGSTFLIVCFFRQLKFHFTSNHHFGFEAAAWYWHFVDVVWLFLYVSIYWWGS</sequence>
<evidence type="ECO:0000250" key="1">
    <source>
        <dbReference type="UniProtKB" id="P00415"/>
    </source>
</evidence>
<evidence type="ECO:0000250" key="2">
    <source>
        <dbReference type="UniProtKB" id="P00420"/>
    </source>
</evidence>
<evidence type="ECO:0000305" key="3"/>
<proteinExistence type="inferred from homology"/>
<keyword id="KW-0472">Membrane</keyword>
<keyword id="KW-0496">Mitochondrion</keyword>
<keyword id="KW-0999">Mitochondrion inner membrane</keyword>
<keyword id="KW-1278">Translocase</keyword>
<keyword id="KW-0812">Transmembrane</keyword>
<keyword id="KW-1133">Transmembrane helix</keyword>